<evidence type="ECO:0000250" key="1"/>
<evidence type="ECO:0000255" key="2"/>
<evidence type="ECO:0000256" key="3">
    <source>
        <dbReference type="SAM" id="MobiDB-lite"/>
    </source>
</evidence>
<evidence type="ECO:0000269" key="4">
    <source>
    </source>
</evidence>
<evidence type="ECO:0000305" key="5"/>
<comment type="function">
    <text>Not known. Binds calcium ions.</text>
</comment>
<comment type="subcellular location">
    <subcellularLocation>
        <location>Secreted</location>
        <location>Extracellular space</location>
        <location>Extracellular matrix</location>
        <location>Basement membrane</location>
    </subcellularLocation>
</comment>
<comment type="PTM">
    <text>Extensively O-glycosylated and also N-glycosylated.</text>
</comment>
<comment type="PTM">
    <text evidence="4">About four tyrosines are sulfated.</text>
</comment>
<comment type="similarity">
    <text evidence="5">In the N-terminal section; belongs to the type-B carboxylesterase/lipase family.</text>
</comment>
<gene>
    <name type="primary">Glt</name>
    <name type="ORF">CG9280</name>
</gene>
<organism>
    <name type="scientific">Drosophila melanogaster</name>
    <name type="common">Fruit fly</name>
    <dbReference type="NCBI Taxonomy" id="7227"/>
    <lineage>
        <taxon>Eukaryota</taxon>
        <taxon>Metazoa</taxon>
        <taxon>Ecdysozoa</taxon>
        <taxon>Arthropoda</taxon>
        <taxon>Hexapoda</taxon>
        <taxon>Insecta</taxon>
        <taxon>Pterygota</taxon>
        <taxon>Neoptera</taxon>
        <taxon>Endopterygota</taxon>
        <taxon>Diptera</taxon>
        <taxon>Brachycera</taxon>
        <taxon>Muscomorpha</taxon>
        <taxon>Ephydroidea</taxon>
        <taxon>Drosophilidae</taxon>
        <taxon>Drosophila</taxon>
        <taxon>Sophophora</taxon>
    </lineage>
</organism>
<reference key="1">
    <citation type="journal article" date="1990" name="EMBO J.">
        <title>Glutactin, a novel Drosophila basement membrane-related glycoprotein with sequence similarity to serine esterases.</title>
        <authorList>
            <person name="Olson P.F."/>
            <person name="Fessler L.I."/>
            <person name="Nelson R.E."/>
            <person name="Sterne R.E."/>
            <person name="Campbell A.G."/>
            <person name="Fessler J.H."/>
        </authorList>
    </citation>
    <scope>NUCLEOTIDE SEQUENCE [GENOMIC DNA]</scope>
    <scope>PARTIAL PROTEIN SEQUENCE</scope>
    <scope>SULFATION</scope>
    <source>
        <strain>Oregon-R</strain>
    </source>
</reference>
<reference key="2">
    <citation type="journal article" date="2000" name="Science">
        <title>The genome sequence of Drosophila melanogaster.</title>
        <authorList>
            <person name="Adams M.D."/>
            <person name="Celniker S.E."/>
            <person name="Holt R.A."/>
            <person name="Evans C.A."/>
            <person name="Gocayne J.D."/>
            <person name="Amanatides P.G."/>
            <person name="Scherer S.E."/>
            <person name="Li P.W."/>
            <person name="Hoskins R.A."/>
            <person name="Galle R.F."/>
            <person name="George R.A."/>
            <person name="Lewis S.E."/>
            <person name="Richards S."/>
            <person name="Ashburner M."/>
            <person name="Henderson S.N."/>
            <person name="Sutton G.G."/>
            <person name="Wortman J.R."/>
            <person name="Yandell M.D."/>
            <person name="Zhang Q."/>
            <person name="Chen L.X."/>
            <person name="Brandon R.C."/>
            <person name="Rogers Y.-H.C."/>
            <person name="Blazej R.G."/>
            <person name="Champe M."/>
            <person name="Pfeiffer B.D."/>
            <person name="Wan K.H."/>
            <person name="Doyle C."/>
            <person name="Baxter E.G."/>
            <person name="Helt G."/>
            <person name="Nelson C.R."/>
            <person name="Miklos G.L.G."/>
            <person name="Abril J.F."/>
            <person name="Agbayani A."/>
            <person name="An H.-J."/>
            <person name="Andrews-Pfannkoch C."/>
            <person name="Baldwin D."/>
            <person name="Ballew R.M."/>
            <person name="Basu A."/>
            <person name="Baxendale J."/>
            <person name="Bayraktaroglu L."/>
            <person name="Beasley E.M."/>
            <person name="Beeson K.Y."/>
            <person name="Benos P.V."/>
            <person name="Berman B.P."/>
            <person name="Bhandari D."/>
            <person name="Bolshakov S."/>
            <person name="Borkova D."/>
            <person name="Botchan M.R."/>
            <person name="Bouck J."/>
            <person name="Brokstein P."/>
            <person name="Brottier P."/>
            <person name="Burtis K.C."/>
            <person name="Busam D.A."/>
            <person name="Butler H."/>
            <person name="Cadieu E."/>
            <person name="Center A."/>
            <person name="Chandra I."/>
            <person name="Cherry J.M."/>
            <person name="Cawley S."/>
            <person name="Dahlke C."/>
            <person name="Davenport L.B."/>
            <person name="Davies P."/>
            <person name="de Pablos B."/>
            <person name="Delcher A."/>
            <person name="Deng Z."/>
            <person name="Mays A.D."/>
            <person name="Dew I."/>
            <person name="Dietz S.M."/>
            <person name="Dodson K."/>
            <person name="Doup L.E."/>
            <person name="Downes M."/>
            <person name="Dugan-Rocha S."/>
            <person name="Dunkov B.C."/>
            <person name="Dunn P."/>
            <person name="Durbin K.J."/>
            <person name="Evangelista C.C."/>
            <person name="Ferraz C."/>
            <person name="Ferriera S."/>
            <person name="Fleischmann W."/>
            <person name="Fosler C."/>
            <person name="Gabrielian A.E."/>
            <person name="Garg N.S."/>
            <person name="Gelbart W.M."/>
            <person name="Glasser K."/>
            <person name="Glodek A."/>
            <person name="Gong F."/>
            <person name="Gorrell J.H."/>
            <person name="Gu Z."/>
            <person name="Guan P."/>
            <person name="Harris M."/>
            <person name="Harris N.L."/>
            <person name="Harvey D.A."/>
            <person name="Heiman T.J."/>
            <person name="Hernandez J.R."/>
            <person name="Houck J."/>
            <person name="Hostin D."/>
            <person name="Houston K.A."/>
            <person name="Howland T.J."/>
            <person name="Wei M.-H."/>
            <person name="Ibegwam C."/>
            <person name="Jalali M."/>
            <person name="Kalush F."/>
            <person name="Karpen G.H."/>
            <person name="Ke Z."/>
            <person name="Kennison J.A."/>
            <person name="Ketchum K.A."/>
            <person name="Kimmel B.E."/>
            <person name="Kodira C.D."/>
            <person name="Kraft C.L."/>
            <person name="Kravitz S."/>
            <person name="Kulp D."/>
            <person name="Lai Z."/>
            <person name="Lasko P."/>
            <person name="Lei Y."/>
            <person name="Levitsky A.A."/>
            <person name="Li J.H."/>
            <person name="Li Z."/>
            <person name="Liang Y."/>
            <person name="Lin X."/>
            <person name="Liu X."/>
            <person name="Mattei B."/>
            <person name="McIntosh T.C."/>
            <person name="McLeod M.P."/>
            <person name="McPherson D."/>
            <person name="Merkulov G."/>
            <person name="Milshina N.V."/>
            <person name="Mobarry C."/>
            <person name="Morris J."/>
            <person name="Moshrefi A."/>
            <person name="Mount S.M."/>
            <person name="Moy M."/>
            <person name="Murphy B."/>
            <person name="Murphy L."/>
            <person name="Muzny D.M."/>
            <person name="Nelson D.L."/>
            <person name="Nelson D.R."/>
            <person name="Nelson K.A."/>
            <person name="Nixon K."/>
            <person name="Nusskern D.R."/>
            <person name="Pacleb J.M."/>
            <person name="Palazzolo M."/>
            <person name="Pittman G.S."/>
            <person name="Pan S."/>
            <person name="Pollard J."/>
            <person name="Puri V."/>
            <person name="Reese M.G."/>
            <person name="Reinert K."/>
            <person name="Remington K."/>
            <person name="Saunders R.D.C."/>
            <person name="Scheeler F."/>
            <person name="Shen H."/>
            <person name="Shue B.C."/>
            <person name="Siden-Kiamos I."/>
            <person name="Simpson M."/>
            <person name="Skupski M.P."/>
            <person name="Smith T.J."/>
            <person name="Spier E."/>
            <person name="Spradling A.C."/>
            <person name="Stapleton M."/>
            <person name="Strong R."/>
            <person name="Sun E."/>
            <person name="Svirskas R."/>
            <person name="Tector C."/>
            <person name="Turner R."/>
            <person name="Venter E."/>
            <person name="Wang A.H."/>
            <person name="Wang X."/>
            <person name="Wang Z.-Y."/>
            <person name="Wassarman D.A."/>
            <person name="Weinstock G.M."/>
            <person name="Weissenbach J."/>
            <person name="Williams S.M."/>
            <person name="Woodage T."/>
            <person name="Worley K.C."/>
            <person name="Wu D."/>
            <person name="Yang S."/>
            <person name="Yao Q.A."/>
            <person name="Ye J."/>
            <person name="Yeh R.-F."/>
            <person name="Zaveri J.S."/>
            <person name="Zhan M."/>
            <person name="Zhang G."/>
            <person name="Zhao Q."/>
            <person name="Zheng L."/>
            <person name="Zheng X.H."/>
            <person name="Zhong F.N."/>
            <person name="Zhong W."/>
            <person name="Zhou X."/>
            <person name="Zhu S.C."/>
            <person name="Zhu X."/>
            <person name="Smith H.O."/>
            <person name="Gibbs R.A."/>
            <person name="Myers E.W."/>
            <person name="Rubin G.M."/>
            <person name="Venter J.C."/>
        </authorList>
    </citation>
    <scope>NUCLEOTIDE SEQUENCE [LARGE SCALE GENOMIC DNA]</scope>
    <source>
        <strain>Berkeley</strain>
    </source>
</reference>
<reference key="3">
    <citation type="journal article" date="2002" name="Genome Biol.">
        <title>Annotation of the Drosophila melanogaster euchromatic genome: a systematic review.</title>
        <authorList>
            <person name="Misra S."/>
            <person name="Crosby M.A."/>
            <person name="Mungall C.J."/>
            <person name="Matthews B.B."/>
            <person name="Campbell K.S."/>
            <person name="Hradecky P."/>
            <person name="Huang Y."/>
            <person name="Kaminker J.S."/>
            <person name="Millburn G.H."/>
            <person name="Prochnik S.E."/>
            <person name="Smith C.D."/>
            <person name="Tupy J.L."/>
            <person name="Whitfield E.J."/>
            <person name="Bayraktaroglu L."/>
            <person name="Berman B.P."/>
            <person name="Bettencourt B.R."/>
            <person name="Celniker S.E."/>
            <person name="de Grey A.D.N.J."/>
            <person name="Drysdale R.A."/>
            <person name="Harris N.L."/>
            <person name="Richter J."/>
            <person name="Russo S."/>
            <person name="Schroeder A.J."/>
            <person name="Shu S.Q."/>
            <person name="Stapleton M."/>
            <person name="Yamada C."/>
            <person name="Ashburner M."/>
            <person name="Gelbart W.M."/>
            <person name="Rubin G.M."/>
            <person name="Lewis S.E."/>
        </authorList>
    </citation>
    <scope>GENOME REANNOTATION</scope>
    <source>
        <strain>Berkeley</strain>
    </source>
</reference>
<reference key="4">
    <citation type="journal article" date="2002" name="Genome Biol.">
        <title>A Drosophila full-length cDNA resource.</title>
        <authorList>
            <person name="Stapleton M."/>
            <person name="Carlson J.W."/>
            <person name="Brokstein P."/>
            <person name="Yu C."/>
            <person name="Champe M."/>
            <person name="George R.A."/>
            <person name="Guarin H."/>
            <person name="Kronmiller B."/>
            <person name="Pacleb J.M."/>
            <person name="Park S."/>
            <person name="Wan K.H."/>
            <person name="Rubin G.M."/>
            <person name="Celniker S.E."/>
        </authorList>
    </citation>
    <scope>NUCLEOTIDE SEQUENCE [LARGE SCALE MRNA]</scope>
    <source>
        <strain>Berkeley</strain>
        <tissue>Embryo</tissue>
    </source>
</reference>
<keyword id="KW-0084">Basement membrane</keyword>
<keyword id="KW-0106">Calcium</keyword>
<keyword id="KW-0903">Direct protein sequencing</keyword>
<keyword id="KW-1015">Disulfide bond</keyword>
<keyword id="KW-0272">Extracellular matrix</keyword>
<keyword id="KW-0325">Glycoprotein</keyword>
<keyword id="KW-1185">Reference proteome</keyword>
<keyword id="KW-0964">Secreted</keyword>
<keyword id="KW-0732">Signal</keyword>
<keyword id="KW-0765">Sulfation</keyword>
<accession>P33438</accession>
<accession>A4V0G5</accession>
<accession>Q9VLJ3</accession>
<dbReference type="EMBL" id="X53286">
    <property type="protein sequence ID" value="CAA37380.1"/>
    <property type="molecule type" value="Genomic_DNA"/>
</dbReference>
<dbReference type="EMBL" id="AE014134">
    <property type="protein sequence ID" value="AAF52697.1"/>
    <property type="molecule type" value="Genomic_DNA"/>
</dbReference>
<dbReference type="EMBL" id="AE014134">
    <property type="protein sequence ID" value="AAN10678.1"/>
    <property type="molecule type" value="Genomic_DNA"/>
</dbReference>
<dbReference type="EMBL" id="AE014134">
    <property type="protein sequence ID" value="AAN10679.1"/>
    <property type="molecule type" value="Genomic_DNA"/>
</dbReference>
<dbReference type="EMBL" id="AY069776">
    <property type="protein sequence ID" value="AAL39921.1"/>
    <property type="molecule type" value="mRNA"/>
</dbReference>
<dbReference type="PIR" id="S12519">
    <property type="entry name" value="S12519"/>
</dbReference>
<dbReference type="RefSeq" id="NP_001245946.1">
    <property type="nucleotide sequence ID" value="NM_001259017.2"/>
</dbReference>
<dbReference type="RefSeq" id="NP_477504.1">
    <property type="nucleotide sequence ID" value="NM_058156.4"/>
</dbReference>
<dbReference type="SMR" id="P33438"/>
<dbReference type="BioGRID" id="60312">
    <property type="interactions" value="46"/>
</dbReference>
<dbReference type="FunCoup" id="P33438">
    <property type="interactions" value="2"/>
</dbReference>
<dbReference type="IntAct" id="P33438">
    <property type="interactions" value="36"/>
</dbReference>
<dbReference type="STRING" id="7227.FBpp0079331"/>
<dbReference type="ESTHER" id="drome-gluta">
    <property type="family name" value="Glutactin"/>
</dbReference>
<dbReference type="GlyCosmos" id="P33438">
    <property type="glycosylation" value="4 sites, No reported glycans"/>
</dbReference>
<dbReference type="GlyGen" id="P33438">
    <property type="glycosylation" value="5 sites, 1 O-linked glycan (1 site)"/>
</dbReference>
<dbReference type="PaxDb" id="7227-FBpp0079329"/>
<dbReference type="DNASU" id="34193"/>
<dbReference type="EnsemblMetazoa" id="FBtr0079727">
    <property type="protein sequence ID" value="FBpp0079331"/>
    <property type="gene ID" value="FBgn0001114"/>
</dbReference>
<dbReference type="EnsemblMetazoa" id="FBtr0307091">
    <property type="protein sequence ID" value="FBpp0297934"/>
    <property type="gene ID" value="FBgn0001114"/>
</dbReference>
<dbReference type="GeneID" id="34193"/>
<dbReference type="KEGG" id="dme:Dmel_CG9280"/>
<dbReference type="UCSC" id="CG9280-RA">
    <property type="organism name" value="d. melanogaster"/>
</dbReference>
<dbReference type="AGR" id="FB:FBgn0001114"/>
<dbReference type="CTD" id="34193"/>
<dbReference type="FlyBase" id="FBgn0001114">
    <property type="gene designation" value="Glt"/>
</dbReference>
<dbReference type="VEuPathDB" id="VectorBase:FBgn0001114"/>
<dbReference type="eggNOG" id="KOG1516">
    <property type="taxonomic scope" value="Eukaryota"/>
</dbReference>
<dbReference type="GeneTree" id="ENSGT00940000164971"/>
<dbReference type="HOGENOM" id="CLU_295824_0_0_1"/>
<dbReference type="InParanoid" id="P33438"/>
<dbReference type="OMA" id="MILYRAP"/>
<dbReference type="OrthoDB" id="3200163at2759"/>
<dbReference type="PhylomeDB" id="P33438"/>
<dbReference type="SignaLink" id="P33438"/>
<dbReference type="BioGRID-ORCS" id="34193">
    <property type="hits" value="0 hits in 1 CRISPR screen"/>
</dbReference>
<dbReference type="GenomeRNAi" id="34193"/>
<dbReference type="PRO" id="PR:P33438"/>
<dbReference type="Proteomes" id="UP000000803">
    <property type="component" value="Chromosome 2L"/>
</dbReference>
<dbReference type="Bgee" id="FBgn0001114">
    <property type="expression patterns" value="Expressed in hemocyte (sensu Nematoda and Protostomia) in arthropod fat body and 66 other cell types or tissues"/>
</dbReference>
<dbReference type="ExpressionAtlas" id="P33438">
    <property type="expression patterns" value="baseline and differential"/>
</dbReference>
<dbReference type="GO" id="GO:0005604">
    <property type="term" value="C:basement membrane"/>
    <property type="evidence" value="ECO:0000314"/>
    <property type="project" value="FlyBase"/>
</dbReference>
<dbReference type="GO" id="GO:0005615">
    <property type="term" value="C:extracellular space"/>
    <property type="evidence" value="ECO:0000314"/>
    <property type="project" value="FlyBase"/>
</dbReference>
<dbReference type="GO" id="GO:0031983">
    <property type="term" value="C:vesicle lumen"/>
    <property type="evidence" value="ECO:0000314"/>
    <property type="project" value="FlyBase"/>
</dbReference>
<dbReference type="GO" id="GO:0098542">
    <property type="term" value="P:defense response to other organism"/>
    <property type="evidence" value="ECO:0000315"/>
    <property type="project" value="FlyBase"/>
</dbReference>
<dbReference type="GO" id="GO:0042381">
    <property type="term" value="P:hemolymph coagulation"/>
    <property type="evidence" value="ECO:0000314"/>
    <property type="project" value="FlyBase"/>
</dbReference>
<dbReference type="GO" id="GO:0008045">
    <property type="term" value="P:motor neuron axon guidance"/>
    <property type="evidence" value="ECO:0000315"/>
    <property type="project" value="FlyBase"/>
</dbReference>
<dbReference type="GO" id="GO:0016201">
    <property type="term" value="P:synaptic target inhibition"/>
    <property type="evidence" value="ECO:0000315"/>
    <property type="project" value="FlyBase"/>
</dbReference>
<dbReference type="FunFam" id="3.40.50.1820:FF:000560">
    <property type="entry name" value="Glutactin"/>
    <property type="match status" value="1"/>
</dbReference>
<dbReference type="Gene3D" id="3.40.50.1820">
    <property type="entry name" value="alpha/beta hydrolase"/>
    <property type="match status" value="1"/>
</dbReference>
<dbReference type="InterPro" id="IPR029058">
    <property type="entry name" value="AB_hydrolase_fold"/>
</dbReference>
<dbReference type="InterPro" id="IPR002018">
    <property type="entry name" value="CarbesteraseB"/>
</dbReference>
<dbReference type="InterPro" id="IPR019819">
    <property type="entry name" value="Carboxylesterase_B_CS"/>
</dbReference>
<dbReference type="PANTHER" id="PTHR43142:SF12">
    <property type="entry name" value="CARBOXYLESTERASE TYPE B DOMAIN-CONTAINING PROTEIN-RELATED"/>
    <property type="match status" value="1"/>
</dbReference>
<dbReference type="PANTHER" id="PTHR43142">
    <property type="entry name" value="CARBOXYLIC ESTER HYDROLASE"/>
    <property type="match status" value="1"/>
</dbReference>
<dbReference type="Pfam" id="PF00135">
    <property type="entry name" value="COesterase"/>
    <property type="match status" value="1"/>
</dbReference>
<dbReference type="SUPFAM" id="SSF53474">
    <property type="entry name" value="alpha/beta-Hydrolases"/>
    <property type="match status" value="1"/>
</dbReference>
<dbReference type="PROSITE" id="PS00941">
    <property type="entry name" value="CARBOXYLESTERASE_B_2"/>
    <property type="match status" value="1"/>
</dbReference>
<name>GLT_DROME</name>
<sequence>MKPLLLVLALCGAQVHAHSVGLRPDYNDYSDEDTRRDWLPEPLKPVPWQSETRYAQPQEAVVQAPEVGQILGISGHKTIANRPVNAFLGIRYGTVGGGLARFQAAQPIGYQGRVNATVQSPNCAQFPELDRLRLSESRGENVDDCLTLDIYAPEGANQLPVLVFVHGEMLFDGGSEEAQPDYVLEKDVLLVSINYRLAPFGFLSALTDELPGNVALSDLQLALEWLQRNVVHFGGNAGQVTLVGQAGGATLAHALSLSGRAGNLFQQLILQSGTALNPYLIDNQPLDTLSTFARLARCPPPSINPSAQGLKPLYDCLARLPTSQLVAAFEQLLLQNEHLGLTQLGGFKLVVGDPLGFLPSHPASLATNSSLALPMIIGATKDASAFIVSRIYDQLARLQSRNVSDYIDVVLRHTAPPSEHRLWKQWALREIFTPIQEQTASLQTVAPGLLELSNYILYRAPVINSISQSYRSVPAYLYTFDYRGEHHRFGHLSNPLPFGVDASLSDDSVYLFPYPPEASRLNPLDRSLSRALVTMWVNFATTGVPNPSSGVWPQATSEYGPFLRFTNNQQSPLELDPHFGEGIYLPNYRVIYKPTTNFSPPITTTTTTTTTTTTTSRPYAYNPYANWQNRPSQQHPNWHPADPEYVRAQEARQQEFIREREQRRREQQLRDQQRYPQQEPREQQDERIRQQREQEERLRQQREQEERLRQQRELEERIRQQQEREQYEREQQEREQREREELERQQREREQQQPEQQPEYNPEPVNPWGYPVQEPQPDDNPEDGRLPYPSYEQYGPEGNENLPETDANRNFSEEDREQQQQEQLRREQQEQQEREYQLQLEREQQEREQQERGQQEPGPEEYPSYEEYSRALQEKNAERDRIYAEEQERERQQQETLLQENQQHPEQSLPEEQPTHPNYEAYDGDRSYAEEQEREQQRRDQVEQEREEQPDEDQGEEYERSPDEEEAAEQDVLKVEDFPSYEAYLEAATKLREEQEEQEKLEEERYRAQQEEEDRIQAERERNSRN</sequence>
<protein>
    <recommendedName>
        <fullName>Glutactin</fullName>
    </recommendedName>
</protein>
<feature type="signal peptide">
    <location>
        <begin position="1"/>
        <end position="17"/>
    </location>
</feature>
<feature type="chain" id="PRO_0000008639" description="Glutactin">
    <location>
        <begin position="18"/>
        <end position="1026"/>
    </location>
</feature>
<feature type="region of interest" description="Disordered" evidence="3">
    <location>
        <begin position="601"/>
        <end position="641"/>
    </location>
</feature>
<feature type="region of interest" description="Disordered" evidence="3">
    <location>
        <begin position="659"/>
        <end position="695"/>
    </location>
</feature>
<feature type="region of interest" description="Disordered" evidence="3">
    <location>
        <begin position="723"/>
        <end position="1026"/>
    </location>
</feature>
<feature type="compositionally biased region" description="Low complexity" evidence="3">
    <location>
        <begin position="603"/>
        <end position="615"/>
    </location>
</feature>
<feature type="compositionally biased region" description="Polar residues" evidence="3">
    <location>
        <begin position="625"/>
        <end position="636"/>
    </location>
</feature>
<feature type="compositionally biased region" description="Basic and acidic residues" evidence="3">
    <location>
        <begin position="723"/>
        <end position="752"/>
    </location>
</feature>
<feature type="compositionally biased region" description="Basic and acidic residues" evidence="3">
    <location>
        <begin position="811"/>
        <end position="854"/>
    </location>
</feature>
<feature type="compositionally biased region" description="Low complexity" evidence="3">
    <location>
        <begin position="855"/>
        <end position="866"/>
    </location>
</feature>
<feature type="compositionally biased region" description="Basic and acidic residues" evidence="3">
    <location>
        <begin position="867"/>
        <end position="893"/>
    </location>
</feature>
<feature type="compositionally biased region" description="Basic and acidic residues" evidence="3">
    <location>
        <begin position="923"/>
        <end position="944"/>
    </location>
</feature>
<feature type="compositionally biased region" description="Acidic residues" evidence="3">
    <location>
        <begin position="945"/>
        <end position="969"/>
    </location>
</feature>
<feature type="compositionally biased region" description="Basic and acidic residues" evidence="3">
    <location>
        <begin position="1002"/>
        <end position="1026"/>
    </location>
</feature>
<feature type="modified residue" description="Sulfotyrosine" evidence="2">
    <location>
        <position position="26"/>
    </location>
</feature>
<feature type="modified residue" description="Sulfotyrosine" evidence="2">
    <location>
        <position position="29"/>
    </location>
</feature>
<feature type="modified residue" description="Sulfotyrosine" evidence="2">
    <location>
        <position position="182"/>
    </location>
</feature>
<feature type="modified residue" description="Sulfotyrosine" evidence="2">
    <location>
        <position position="559"/>
    </location>
</feature>
<feature type="modified residue" description="Sulfotyrosine" evidence="2">
    <location>
        <position position="645"/>
    </location>
</feature>
<feature type="modified residue" description="Sulfotyrosine" evidence="2">
    <location>
        <position position="727"/>
    </location>
</feature>
<feature type="modified residue" description="Sulfotyrosine" evidence="2">
    <location>
        <position position="836"/>
    </location>
</feature>
<feature type="modified residue" description="Sulfotyrosine" evidence="2">
    <location>
        <position position="862"/>
    </location>
</feature>
<feature type="modified residue" description="Sulfotyrosine" evidence="2">
    <location>
        <position position="865"/>
    </location>
</feature>
<feature type="modified residue" description="Sulfotyrosine" evidence="2">
    <location>
        <position position="868"/>
    </location>
</feature>
<feature type="modified residue" description="Sulfotyrosine" evidence="2">
    <location>
        <position position="922"/>
    </location>
</feature>
<feature type="modified residue" description="Sulfotyrosine" evidence="2">
    <location>
        <position position="928"/>
    </location>
</feature>
<feature type="modified residue" description="Sulfotyrosine" evidence="2">
    <location>
        <position position="981"/>
    </location>
</feature>
<feature type="modified residue" description="Sulfotyrosine" evidence="2">
    <location>
        <position position="984"/>
    </location>
</feature>
<feature type="modified residue" description="Sulfotyrosine" evidence="2">
    <location>
        <position position="1006"/>
    </location>
</feature>
<feature type="glycosylation site" description="N-linked (GlcNAc...) asparagine" evidence="2">
    <location>
        <position position="115"/>
    </location>
</feature>
<feature type="glycosylation site" description="N-linked (GlcNAc...) asparagine" evidence="2">
    <location>
        <position position="368"/>
    </location>
</feature>
<feature type="glycosylation site" description="N-linked (GlcNAc...) asparagine" evidence="2">
    <location>
        <position position="402"/>
    </location>
</feature>
<feature type="glycosylation site" description="N-linked (GlcNAc...) asparagine" evidence="2">
    <location>
        <position position="810"/>
    </location>
</feature>
<feature type="disulfide bond" evidence="1">
    <location>
        <begin position="123"/>
        <end position="145"/>
    </location>
</feature>
<feature type="disulfide bond" evidence="1">
    <location>
        <begin position="298"/>
        <end position="316"/>
    </location>
</feature>
<feature type="sequence conflict" description="In Ref. 1; CAA37380." evidence="5" ref="1">
    <location>
        <begin position="919"/>
        <end position="921"/>
    </location>
</feature>
<feature type="sequence conflict" description="In Ref. 1; CAA37380." evidence="5" ref="1">
    <original>S</original>
    <variation>L</variation>
    <location>
        <position position="961"/>
    </location>
</feature>
<proteinExistence type="evidence at protein level"/>